<feature type="initiator methionine" description="Removed" evidence="1">
    <location>
        <position position="1"/>
    </location>
</feature>
<feature type="chain" id="PRO_0000225618" description="Transcriptional regulator protein Pur-beta">
    <location>
        <begin position="2"/>
        <end position="297"/>
    </location>
</feature>
<feature type="region of interest" description="Disordered" evidence="4">
    <location>
        <begin position="1"/>
        <end position="26"/>
    </location>
</feature>
<feature type="region of interest" description="DNA-binding" evidence="2">
    <location>
        <begin position="23"/>
        <end position="246"/>
    </location>
</feature>
<feature type="region of interest" description="Disordered" evidence="4">
    <location>
        <begin position="275"/>
        <end position="297"/>
    </location>
</feature>
<feature type="compositionally biased region" description="Basic and acidic residues" evidence="4">
    <location>
        <begin position="275"/>
        <end position="288"/>
    </location>
</feature>
<feature type="modified residue" description="N-acetylalanine" evidence="3">
    <location>
        <position position="2"/>
    </location>
</feature>
<gene>
    <name type="primary">purb</name>
</gene>
<comment type="function">
    <text evidence="2">Transcriptional regulator which can act as an activator or a repressor.</text>
</comment>
<comment type="subcellular location">
    <subcellularLocation>
        <location evidence="2">Nucleus</location>
    </subcellularLocation>
</comment>
<comment type="similarity">
    <text evidence="5">Belongs to the PUR DNA-binding protein family.</text>
</comment>
<sequence length="297" mass="32606">MADGDSGSERGGSSGGLQHFQREQETQELASKRLDIQNKRFYLDVKQNAKGRFIKIAEVGAGGSKSRLTLSMSVAAEFRDYLGDFIEHYAQLGPSSPEQIAQSSGGDDGGPRRALKSEFLVRENRKYYLDLKENQRGRFLRIRQTVNRGPGFGVGGGGGPGGGVQAGQTIALPAQGLIEFRDALAKLIDDYGGEDEELSGGPGAAGGYGELPEGTSIMVDSKRFFFDVGSNKYGVFLRVSEVKPSYRNSITIPFKAWGKFGGAFSRYAEEMKEIQERHRDKMYERREESEGEDVDDD</sequence>
<organism>
    <name type="scientific">Danio rerio</name>
    <name type="common">Zebrafish</name>
    <name type="synonym">Brachydanio rerio</name>
    <dbReference type="NCBI Taxonomy" id="7955"/>
    <lineage>
        <taxon>Eukaryota</taxon>
        <taxon>Metazoa</taxon>
        <taxon>Chordata</taxon>
        <taxon>Craniata</taxon>
        <taxon>Vertebrata</taxon>
        <taxon>Euteleostomi</taxon>
        <taxon>Actinopterygii</taxon>
        <taxon>Neopterygii</taxon>
        <taxon>Teleostei</taxon>
        <taxon>Ostariophysi</taxon>
        <taxon>Cypriniformes</taxon>
        <taxon>Danionidae</taxon>
        <taxon>Danioninae</taxon>
        <taxon>Danio</taxon>
    </lineage>
</organism>
<accession>Q6PHK6</accession>
<accession>Q6NW99</accession>
<reference key="1">
    <citation type="submission" date="2003-08" db="EMBL/GenBank/DDBJ databases">
        <authorList>
            <consortium name="NIH - Zebrafish Gene Collection (ZGC) project"/>
        </authorList>
    </citation>
    <scope>NUCLEOTIDE SEQUENCE [LARGE SCALE MRNA]</scope>
    <source>
        <tissue>Embryo</tissue>
    </source>
</reference>
<evidence type="ECO:0000250" key="1"/>
<evidence type="ECO:0000250" key="2">
    <source>
        <dbReference type="UniProtKB" id="O35295"/>
    </source>
</evidence>
<evidence type="ECO:0000250" key="3">
    <source>
        <dbReference type="UniProtKB" id="Q96QR8"/>
    </source>
</evidence>
<evidence type="ECO:0000256" key="4">
    <source>
        <dbReference type="SAM" id="MobiDB-lite"/>
    </source>
</evidence>
<evidence type="ECO:0000305" key="5"/>
<name>PURB_DANRE</name>
<protein>
    <recommendedName>
        <fullName>Transcriptional regulator protein Pur-beta</fullName>
    </recommendedName>
    <alternativeName>
        <fullName>Purine-rich element-binding protein B</fullName>
    </alternativeName>
</protein>
<proteinExistence type="evidence at transcript level"/>
<dbReference type="EMBL" id="BC056517">
    <property type="protein sequence ID" value="AAH56517.1"/>
    <property type="molecule type" value="mRNA"/>
</dbReference>
<dbReference type="EMBL" id="BC067670">
    <property type="protein sequence ID" value="AAH67670.1"/>
    <property type="molecule type" value="mRNA"/>
</dbReference>
<dbReference type="RefSeq" id="NP_956841.1">
    <property type="nucleotide sequence ID" value="NM_200547.1"/>
</dbReference>
<dbReference type="SMR" id="Q6PHK6"/>
<dbReference type="FunCoup" id="Q6PHK6">
    <property type="interactions" value="2303"/>
</dbReference>
<dbReference type="STRING" id="7955.ENSDARP00000136139"/>
<dbReference type="PaxDb" id="7955-ENSDARP00000100627"/>
<dbReference type="Ensembl" id="ENSDART00000166528">
    <property type="protein sequence ID" value="ENSDARP00000136139"/>
    <property type="gene ID" value="ENSDARG00000103546"/>
</dbReference>
<dbReference type="GeneID" id="393519"/>
<dbReference type="KEGG" id="dre:393519"/>
<dbReference type="AGR" id="ZFIN:ZDB-GENE-040426-1478"/>
<dbReference type="CTD" id="393519"/>
<dbReference type="ZFIN" id="ZDB-GENE-040426-1478">
    <property type="gene designation" value="purbb"/>
</dbReference>
<dbReference type="eggNOG" id="KOG3074">
    <property type="taxonomic scope" value="Eukaryota"/>
</dbReference>
<dbReference type="HOGENOM" id="CLU_057873_1_1_1"/>
<dbReference type="InParanoid" id="Q6PHK6"/>
<dbReference type="OMA" id="QEKHRDK"/>
<dbReference type="OrthoDB" id="523901at2759"/>
<dbReference type="PhylomeDB" id="Q6PHK6"/>
<dbReference type="TreeFam" id="TF313701"/>
<dbReference type="PRO" id="PR:Q6PHK6"/>
<dbReference type="Proteomes" id="UP000000437">
    <property type="component" value="Chromosome 10"/>
</dbReference>
<dbReference type="Bgee" id="ENSDARG00000103546">
    <property type="expression patterns" value="Expressed in retina and 19 other cell types or tissues"/>
</dbReference>
<dbReference type="GO" id="GO:0005634">
    <property type="term" value="C:nucleus"/>
    <property type="evidence" value="ECO:0000250"/>
    <property type="project" value="UniProtKB"/>
</dbReference>
<dbReference type="GO" id="GO:0000981">
    <property type="term" value="F:DNA-binding transcription factor activity, RNA polymerase II-specific"/>
    <property type="evidence" value="ECO:0000318"/>
    <property type="project" value="GO_Central"/>
</dbReference>
<dbReference type="GO" id="GO:0001227">
    <property type="term" value="F:DNA-binding transcription repressor activity, RNA polymerase II-specific"/>
    <property type="evidence" value="ECO:0000250"/>
    <property type="project" value="UniProtKB"/>
</dbReference>
<dbReference type="GO" id="GO:0032422">
    <property type="term" value="F:purine-rich negative regulatory element binding"/>
    <property type="evidence" value="ECO:0000318"/>
    <property type="project" value="GO_Central"/>
</dbReference>
<dbReference type="GO" id="GO:0000977">
    <property type="term" value="F:RNA polymerase II transcription regulatory region sequence-specific DNA binding"/>
    <property type="evidence" value="ECO:0000318"/>
    <property type="project" value="GO_Central"/>
</dbReference>
<dbReference type="GO" id="GO:0045944">
    <property type="term" value="P:positive regulation of transcription by RNA polymerase II"/>
    <property type="evidence" value="ECO:0000250"/>
    <property type="project" value="UniProtKB"/>
</dbReference>
<dbReference type="GO" id="GO:0006357">
    <property type="term" value="P:regulation of transcription by RNA polymerase II"/>
    <property type="evidence" value="ECO:0000318"/>
    <property type="project" value="GO_Central"/>
</dbReference>
<dbReference type="FunFam" id="3.10.450.700:FF:000001">
    <property type="entry name" value="Purine-rich element binding protein A"/>
    <property type="match status" value="1"/>
</dbReference>
<dbReference type="FunFam" id="3.30.2450.30:FF:000001">
    <property type="entry name" value="Purine-rich element binding protein A"/>
    <property type="match status" value="1"/>
</dbReference>
<dbReference type="Gene3D" id="3.10.450.700">
    <property type="match status" value="1"/>
</dbReference>
<dbReference type="Gene3D" id="3.30.2450.30">
    <property type="match status" value="1"/>
</dbReference>
<dbReference type="InterPro" id="IPR006628">
    <property type="entry name" value="PUR-bd_fam"/>
</dbReference>
<dbReference type="PANTHER" id="PTHR12611">
    <property type="entry name" value="PUR-TRANSCRIPTIONAL ACTIVATOR"/>
    <property type="match status" value="1"/>
</dbReference>
<dbReference type="PANTHER" id="PTHR12611:SF4">
    <property type="entry name" value="TRANSCRIPTIONAL ACTIVATOR PROTEIN PUR-BETA"/>
    <property type="match status" value="1"/>
</dbReference>
<dbReference type="Pfam" id="PF04845">
    <property type="entry name" value="PurA"/>
    <property type="match status" value="1"/>
</dbReference>
<dbReference type="SMART" id="SM00712">
    <property type="entry name" value="PUR"/>
    <property type="match status" value="3"/>
</dbReference>
<keyword id="KW-0007">Acetylation</keyword>
<keyword id="KW-0010">Activator</keyword>
<keyword id="KW-0238">DNA-binding</keyword>
<keyword id="KW-0539">Nucleus</keyword>
<keyword id="KW-1185">Reference proteome</keyword>
<keyword id="KW-0678">Repressor</keyword>
<keyword id="KW-0804">Transcription</keyword>
<keyword id="KW-0805">Transcription regulation</keyword>